<organism>
    <name type="scientific">Listeria innocua serovar 6a (strain ATCC BAA-680 / CLIP 11262)</name>
    <dbReference type="NCBI Taxonomy" id="272626"/>
    <lineage>
        <taxon>Bacteria</taxon>
        <taxon>Bacillati</taxon>
        <taxon>Bacillota</taxon>
        <taxon>Bacilli</taxon>
        <taxon>Bacillales</taxon>
        <taxon>Listeriaceae</taxon>
        <taxon>Listeria</taxon>
    </lineage>
</organism>
<comment type="subcellular location">
    <subcellularLocation>
        <location evidence="1">Cell membrane</location>
        <topology evidence="1">Multi-pass membrane protein</topology>
    </subcellularLocation>
</comment>
<comment type="similarity">
    <text evidence="1">Belongs to the UPF0344 family.</text>
</comment>
<accession>Q929B1</accession>
<gene>
    <name type="ordered locus">lin2366</name>
</gene>
<feature type="chain" id="PRO_0000105889" description="UPF0344 protein lin2366">
    <location>
        <begin position="1"/>
        <end position="120"/>
    </location>
</feature>
<feature type="transmembrane region" description="Helical" evidence="1">
    <location>
        <begin position="3"/>
        <end position="23"/>
    </location>
</feature>
<feature type="transmembrane region" description="Helical" evidence="1">
    <location>
        <begin position="33"/>
        <end position="53"/>
    </location>
</feature>
<feature type="transmembrane region" description="Helical" evidence="1">
    <location>
        <begin position="62"/>
        <end position="82"/>
    </location>
</feature>
<feature type="transmembrane region" description="Helical" evidence="1">
    <location>
        <begin position="92"/>
        <end position="112"/>
    </location>
</feature>
<dbReference type="EMBL" id="AL596172">
    <property type="protein sequence ID" value="CAC97593.1"/>
    <property type="molecule type" value="Genomic_DNA"/>
</dbReference>
<dbReference type="PIR" id="AI1727">
    <property type="entry name" value="AI1727"/>
</dbReference>
<dbReference type="RefSeq" id="WP_003769902.1">
    <property type="nucleotide sequence ID" value="NC_003212.1"/>
</dbReference>
<dbReference type="STRING" id="272626.gene:17566727"/>
<dbReference type="DNASU" id="1131125"/>
<dbReference type="GeneID" id="93235713"/>
<dbReference type="KEGG" id="lin:lin2366"/>
<dbReference type="eggNOG" id="ENOG5033A1U">
    <property type="taxonomic scope" value="Bacteria"/>
</dbReference>
<dbReference type="HOGENOM" id="CLU_146641_1_1_9"/>
<dbReference type="OrthoDB" id="2365314at2"/>
<dbReference type="Proteomes" id="UP000002513">
    <property type="component" value="Chromosome"/>
</dbReference>
<dbReference type="GO" id="GO:0005886">
    <property type="term" value="C:plasma membrane"/>
    <property type="evidence" value="ECO:0007669"/>
    <property type="project" value="UniProtKB-SubCell"/>
</dbReference>
<dbReference type="HAMAP" id="MF_01536">
    <property type="entry name" value="UPF0344"/>
    <property type="match status" value="1"/>
</dbReference>
<dbReference type="InterPro" id="IPR010899">
    <property type="entry name" value="UPF0344"/>
</dbReference>
<dbReference type="NCBIfam" id="NF010197">
    <property type="entry name" value="PRK13673.1-4"/>
    <property type="match status" value="1"/>
</dbReference>
<dbReference type="Pfam" id="PF07457">
    <property type="entry name" value="DUF1516"/>
    <property type="match status" value="1"/>
</dbReference>
<protein>
    <recommendedName>
        <fullName evidence="1">UPF0344 protein lin2366</fullName>
    </recommendedName>
</protein>
<sequence length="120" mass="13664">MWGYVHLISWVAIVVLTVTALLIYSKSVKGFTMLQMINRVFYILVILSGIMMVQYSVKESWILAIFKILMGIIVIGVVEMLLSYRKQQKPTGMFLMIFIIVVVITVSLGFYLSGGYPLFN</sequence>
<keyword id="KW-1003">Cell membrane</keyword>
<keyword id="KW-0472">Membrane</keyword>
<keyword id="KW-0812">Transmembrane</keyword>
<keyword id="KW-1133">Transmembrane helix</keyword>
<name>Y2366_LISIN</name>
<evidence type="ECO:0000255" key="1">
    <source>
        <dbReference type="HAMAP-Rule" id="MF_01536"/>
    </source>
</evidence>
<proteinExistence type="inferred from homology"/>
<reference key="1">
    <citation type="journal article" date="2001" name="Science">
        <title>Comparative genomics of Listeria species.</title>
        <authorList>
            <person name="Glaser P."/>
            <person name="Frangeul L."/>
            <person name="Buchrieser C."/>
            <person name="Rusniok C."/>
            <person name="Amend A."/>
            <person name="Baquero F."/>
            <person name="Berche P."/>
            <person name="Bloecker H."/>
            <person name="Brandt P."/>
            <person name="Chakraborty T."/>
            <person name="Charbit A."/>
            <person name="Chetouani F."/>
            <person name="Couve E."/>
            <person name="de Daruvar A."/>
            <person name="Dehoux P."/>
            <person name="Domann E."/>
            <person name="Dominguez-Bernal G."/>
            <person name="Duchaud E."/>
            <person name="Durant L."/>
            <person name="Dussurget O."/>
            <person name="Entian K.-D."/>
            <person name="Fsihi H."/>
            <person name="Garcia-del Portillo F."/>
            <person name="Garrido P."/>
            <person name="Gautier L."/>
            <person name="Goebel W."/>
            <person name="Gomez-Lopez N."/>
            <person name="Hain T."/>
            <person name="Hauf J."/>
            <person name="Jackson D."/>
            <person name="Jones L.-M."/>
            <person name="Kaerst U."/>
            <person name="Kreft J."/>
            <person name="Kuhn M."/>
            <person name="Kunst F."/>
            <person name="Kurapkat G."/>
            <person name="Madueno E."/>
            <person name="Maitournam A."/>
            <person name="Mata Vicente J."/>
            <person name="Ng E."/>
            <person name="Nedjari H."/>
            <person name="Nordsiek G."/>
            <person name="Novella S."/>
            <person name="de Pablos B."/>
            <person name="Perez-Diaz J.-C."/>
            <person name="Purcell R."/>
            <person name="Remmel B."/>
            <person name="Rose M."/>
            <person name="Schlueter T."/>
            <person name="Simoes N."/>
            <person name="Tierrez A."/>
            <person name="Vazquez-Boland J.-A."/>
            <person name="Voss H."/>
            <person name="Wehland J."/>
            <person name="Cossart P."/>
        </authorList>
    </citation>
    <scope>NUCLEOTIDE SEQUENCE [LARGE SCALE GENOMIC DNA]</scope>
    <source>
        <strain>ATCC BAA-680 / CLIP 11262</strain>
    </source>
</reference>